<feature type="chain" id="PRO_1000190768" description="Thymidylate kinase">
    <location>
        <begin position="1"/>
        <end position="208"/>
    </location>
</feature>
<feature type="binding site" evidence="1">
    <location>
        <begin position="11"/>
        <end position="18"/>
    </location>
    <ligand>
        <name>ATP</name>
        <dbReference type="ChEBI" id="CHEBI:30616"/>
    </ligand>
</feature>
<sequence length="208" mass="23365">MSLGKFVSFEGTEGVGKTTAINGLCERLQAQGIEYVRTREPGGSPFAEQLRELLLDTRTQINDDTELLLMFAARSDHLAQVIMPALSAGKWVICDRFIDSTVAYQGYGRGFGNADMLHKIEALIAGFVPRLPDITLWLDLPVAEGMQRAGKRSVADRFEQQQLDFFDRVYQGFEAQQQAQPQRIQRIDAQGEVEQVADRIWQSVSQQL</sequence>
<gene>
    <name evidence="1" type="primary">tmk</name>
    <name type="ordered locus">PsycPRwf_0126</name>
</gene>
<reference key="1">
    <citation type="submission" date="2007-05" db="EMBL/GenBank/DDBJ databases">
        <title>Complete sequence of chromosome of Psychrobacter sp. PRwf-1.</title>
        <authorList>
            <consortium name="US DOE Joint Genome Institute"/>
            <person name="Copeland A."/>
            <person name="Lucas S."/>
            <person name="Lapidus A."/>
            <person name="Barry K."/>
            <person name="Detter J.C."/>
            <person name="Glavina del Rio T."/>
            <person name="Hammon N."/>
            <person name="Israni S."/>
            <person name="Dalin E."/>
            <person name="Tice H."/>
            <person name="Pitluck S."/>
            <person name="Chain P."/>
            <person name="Malfatti S."/>
            <person name="Shin M."/>
            <person name="Vergez L."/>
            <person name="Schmutz J."/>
            <person name="Larimer F."/>
            <person name="Land M."/>
            <person name="Hauser L."/>
            <person name="Kyrpides N."/>
            <person name="Kim E."/>
            <person name="Tiedje J."/>
            <person name="Richardson P."/>
        </authorList>
    </citation>
    <scope>NUCLEOTIDE SEQUENCE [LARGE SCALE GENOMIC DNA]</scope>
    <source>
        <strain>PRwf-1</strain>
    </source>
</reference>
<organism>
    <name type="scientific">Psychrobacter sp. (strain PRwf-1)</name>
    <dbReference type="NCBI Taxonomy" id="349106"/>
    <lineage>
        <taxon>Bacteria</taxon>
        <taxon>Pseudomonadati</taxon>
        <taxon>Pseudomonadota</taxon>
        <taxon>Gammaproteobacteria</taxon>
        <taxon>Moraxellales</taxon>
        <taxon>Moraxellaceae</taxon>
        <taxon>Psychrobacter</taxon>
    </lineage>
</organism>
<protein>
    <recommendedName>
        <fullName evidence="1">Thymidylate kinase</fullName>
        <ecNumber evidence="1">2.7.4.9</ecNumber>
    </recommendedName>
    <alternativeName>
        <fullName evidence="1">dTMP kinase</fullName>
    </alternativeName>
</protein>
<keyword id="KW-0067">ATP-binding</keyword>
<keyword id="KW-0418">Kinase</keyword>
<keyword id="KW-0545">Nucleotide biosynthesis</keyword>
<keyword id="KW-0547">Nucleotide-binding</keyword>
<keyword id="KW-0808">Transferase</keyword>
<dbReference type="EC" id="2.7.4.9" evidence="1"/>
<dbReference type="EMBL" id="CP000713">
    <property type="protein sequence ID" value="ABQ93086.1"/>
    <property type="molecule type" value="Genomic_DNA"/>
</dbReference>
<dbReference type="SMR" id="A5WBP5"/>
<dbReference type="STRING" id="349106.PsycPRwf_0126"/>
<dbReference type="KEGG" id="prw:PsycPRwf_0126"/>
<dbReference type="eggNOG" id="COG0125">
    <property type="taxonomic scope" value="Bacteria"/>
</dbReference>
<dbReference type="HOGENOM" id="CLU_049131_0_2_6"/>
<dbReference type="GO" id="GO:0005829">
    <property type="term" value="C:cytosol"/>
    <property type="evidence" value="ECO:0007669"/>
    <property type="project" value="TreeGrafter"/>
</dbReference>
<dbReference type="GO" id="GO:0005524">
    <property type="term" value="F:ATP binding"/>
    <property type="evidence" value="ECO:0007669"/>
    <property type="project" value="UniProtKB-UniRule"/>
</dbReference>
<dbReference type="GO" id="GO:0004798">
    <property type="term" value="F:dTMP kinase activity"/>
    <property type="evidence" value="ECO:0007669"/>
    <property type="project" value="UniProtKB-UniRule"/>
</dbReference>
<dbReference type="GO" id="GO:0006233">
    <property type="term" value="P:dTDP biosynthetic process"/>
    <property type="evidence" value="ECO:0007669"/>
    <property type="project" value="InterPro"/>
</dbReference>
<dbReference type="GO" id="GO:0006235">
    <property type="term" value="P:dTTP biosynthetic process"/>
    <property type="evidence" value="ECO:0007669"/>
    <property type="project" value="UniProtKB-UniRule"/>
</dbReference>
<dbReference type="GO" id="GO:0006227">
    <property type="term" value="P:dUDP biosynthetic process"/>
    <property type="evidence" value="ECO:0007669"/>
    <property type="project" value="TreeGrafter"/>
</dbReference>
<dbReference type="CDD" id="cd01672">
    <property type="entry name" value="TMPK"/>
    <property type="match status" value="1"/>
</dbReference>
<dbReference type="FunFam" id="3.40.50.300:FF:000225">
    <property type="entry name" value="Thymidylate kinase"/>
    <property type="match status" value="1"/>
</dbReference>
<dbReference type="Gene3D" id="3.40.50.300">
    <property type="entry name" value="P-loop containing nucleotide triphosphate hydrolases"/>
    <property type="match status" value="1"/>
</dbReference>
<dbReference type="HAMAP" id="MF_00165">
    <property type="entry name" value="Thymidylate_kinase"/>
    <property type="match status" value="1"/>
</dbReference>
<dbReference type="InterPro" id="IPR027417">
    <property type="entry name" value="P-loop_NTPase"/>
</dbReference>
<dbReference type="InterPro" id="IPR039430">
    <property type="entry name" value="Thymidylate_kin-like_dom"/>
</dbReference>
<dbReference type="InterPro" id="IPR018095">
    <property type="entry name" value="Thymidylate_kin_CS"/>
</dbReference>
<dbReference type="InterPro" id="IPR018094">
    <property type="entry name" value="Thymidylate_kinase"/>
</dbReference>
<dbReference type="NCBIfam" id="TIGR00041">
    <property type="entry name" value="DTMP_kinase"/>
    <property type="match status" value="1"/>
</dbReference>
<dbReference type="PANTHER" id="PTHR10344">
    <property type="entry name" value="THYMIDYLATE KINASE"/>
    <property type="match status" value="1"/>
</dbReference>
<dbReference type="PANTHER" id="PTHR10344:SF4">
    <property type="entry name" value="UMP-CMP KINASE 2, MITOCHONDRIAL"/>
    <property type="match status" value="1"/>
</dbReference>
<dbReference type="Pfam" id="PF02223">
    <property type="entry name" value="Thymidylate_kin"/>
    <property type="match status" value="1"/>
</dbReference>
<dbReference type="SUPFAM" id="SSF52540">
    <property type="entry name" value="P-loop containing nucleoside triphosphate hydrolases"/>
    <property type="match status" value="1"/>
</dbReference>
<dbReference type="PROSITE" id="PS01331">
    <property type="entry name" value="THYMIDYLATE_KINASE"/>
    <property type="match status" value="1"/>
</dbReference>
<proteinExistence type="inferred from homology"/>
<comment type="function">
    <text evidence="1">Phosphorylation of dTMP to form dTDP in both de novo and salvage pathways of dTTP synthesis.</text>
</comment>
<comment type="catalytic activity">
    <reaction evidence="1">
        <text>dTMP + ATP = dTDP + ADP</text>
        <dbReference type="Rhea" id="RHEA:13517"/>
        <dbReference type="ChEBI" id="CHEBI:30616"/>
        <dbReference type="ChEBI" id="CHEBI:58369"/>
        <dbReference type="ChEBI" id="CHEBI:63528"/>
        <dbReference type="ChEBI" id="CHEBI:456216"/>
        <dbReference type="EC" id="2.7.4.9"/>
    </reaction>
</comment>
<comment type="similarity">
    <text evidence="1">Belongs to the thymidylate kinase family.</text>
</comment>
<name>KTHY_PSYWF</name>
<evidence type="ECO:0000255" key="1">
    <source>
        <dbReference type="HAMAP-Rule" id="MF_00165"/>
    </source>
</evidence>
<accession>A5WBP5</accession>